<feature type="chain" id="PRO_0000106513" description="Protein 7.3">
    <location>
        <begin position="1"/>
        <end position="106"/>
    </location>
</feature>
<feature type="region of interest" description="Disordered" evidence="2">
    <location>
        <begin position="48"/>
        <end position="106"/>
    </location>
</feature>
<evidence type="ECO:0000250" key="1">
    <source>
        <dbReference type="UniProtKB" id="P03751"/>
    </source>
</evidence>
<evidence type="ECO:0000256" key="2">
    <source>
        <dbReference type="SAM" id="MobiDB-lite"/>
    </source>
</evidence>
<evidence type="ECO:0000305" key="3"/>
<protein>
    <recommendedName>
        <fullName>Protein 7.3</fullName>
    </recommendedName>
    <alternativeName>
        <fullName>Gene product 7.3</fullName>
        <shortName>Gp7.3</shortName>
    </alternativeName>
    <alternativeName>
        <fullName>Host specificity protein B</fullName>
    </alternativeName>
</protein>
<reference key="1">
    <citation type="journal article" date="1989" name="J. Mol. Biol.">
        <title>Sequence of bacteriophage T3 DNA from gene 2.5 through gene 9.</title>
        <authorList>
            <person name="Beck P.J."/>
            <person name="Gonzalez S."/>
            <person name="Ward C.L."/>
            <person name="Molineux I.J."/>
        </authorList>
    </citation>
    <scope>NUCLEOTIDE SEQUENCE [GENOMIC DNA]</scope>
    <source>
        <strain>Luria</strain>
    </source>
</reference>
<dbReference type="EMBL" id="X17255">
    <property type="protein sequence ID" value="CAA35151.1"/>
    <property type="molecule type" value="Genomic_DNA"/>
</dbReference>
<dbReference type="PIR" id="S07520">
    <property type="entry name" value="S07520"/>
</dbReference>
<dbReference type="RefSeq" id="NP_523331.1">
    <property type="nucleotide sequence ID" value="NC_003298.1"/>
</dbReference>
<dbReference type="KEGG" id="vg:927414"/>
<dbReference type="GO" id="GO:0098015">
    <property type="term" value="C:virus tail"/>
    <property type="evidence" value="ECO:0007669"/>
    <property type="project" value="UniProtKB-KW"/>
</dbReference>
<dbReference type="GO" id="GO:0098003">
    <property type="term" value="P:viral tail assembly"/>
    <property type="evidence" value="ECO:0007669"/>
    <property type="project" value="UniProtKB-KW"/>
</dbReference>
<dbReference type="InterPro" id="IPR024281">
    <property type="entry name" value="Phage_T7-like_viron_assmbl"/>
</dbReference>
<dbReference type="Pfam" id="PF11653">
    <property type="entry name" value="VirionAssem_T7"/>
    <property type="match status" value="1"/>
</dbReference>
<accession>P20322</accession>
<proteinExistence type="inferred from homology"/>
<keyword id="KW-1188">Viral release from host cell</keyword>
<keyword id="KW-1245">Viral tail assembly</keyword>
<keyword id="KW-1227">Viral tail protein</keyword>
<keyword id="KW-0946">Virion</keyword>
<organism>
    <name type="scientific">Enterobacteria phage T3</name>
    <name type="common">Bacteriophage T3</name>
    <dbReference type="NCBI Taxonomy" id="10759"/>
    <lineage>
        <taxon>Viruses</taxon>
        <taxon>Duplodnaviria</taxon>
        <taxon>Heunggongvirae</taxon>
        <taxon>Uroviricota</taxon>
        <taxon>Caudoviricetes</taxon>
        <taxon>Autographiviridae</taxon>
        <taxon>Studiervirinae</taxon>
        <taxon>Teetrevirus</taxon>
        <taxon>Teetrevirus T3</taxon>
    </lineage>
</organism>
<organismHost>
    <name type="scientific">Escherichia coli</name>
    <dbReference type="NCBI Taxonomy" id="562"/>
</organismHost>
<sequence length="106" mass="10842">MGFFKKIKKAVKKVVKEVGKPIEKAGKEVGKAVGGALGAGKQEIIQQEAPAPVVAAPPPAQVVDVPEQDKAEGEDEAQTESARKKARAGGKKALSVARSSGGGINI</sequence>
<name>GP73_BPT3</name>
<gene>
    <name type="primary">7.3</name>
</gene>
<comment type="function">
    <text evidence="1">Plays an essential role most probably in virion tail assembly. May form a scaffold around which gp11 and gp12 polymerize. Gets ejected from the infecting particle into the bacterial cell.</text>
</comment>
<comment type="subcellular location">
    <subcellularLocation>
        <location evidence="1">Virion</location>
    </subcellularLocation>
    <text evidence="1">Component of the tail.</text>
</comment>
<comment type="similarity">
    <text evidence="3">Belongs to the T7likevirus protein 7.3 family.</text>
</comment>